<sequence>MTTNNLVLAGTITRSRQFDSPAGIAHTVVMLEHKSQRYEAGMLRNVYCQIQVVLSGERFNGVAKNLTAGVEIQVEGFINLQQSRNGQNRLVLHAENVELKT</sequence>
<evidence type="ECO:0000255" key="1">
    <source>
        <dbReference type="HAMAP-Rule" id="MF_00720"/>
    </source>
</evidence>
<keyword id="KW-0235">DNA replication</keyword>
<keyword id="KW-0238">DNA-binding</keyword>
<keyword id="KW-0639">Primosome</keyword>
<keyword id="KW-1185">Reference proteome</keyword>
<organism>
    <name type="scientific">Shewanella pealeana (strain ATCC 700345 / ANG-SQ1)</name>
    <dbReference type="NCBI Taxonomy" id="398579"/>
    <lineage>
        <taxon>Bacteria</taxon>
        <taxon>Pseudomonadati</taxon>
        <taxon>Pseudomonadota</taxon>
        <taxon>Gammaproteobacteria</taxon>
        <taxon>Alteromonadales</taxon>
        <taxon>Shewanellaceae</taxon>
        <taxon>Shewanella</taxon>
    </lineage>
</organism>
<gene>
    <name evidence="1" type="primary">priB</name>
    <name type="ordered locus">Spea_3585</name>
</gene>
<name>PRIB_SHEPA</name>
<reference key="1">
    <citation type="submission" date="2007-10" db="EMBL/GenBank/DDBJ databases">
        <title>Complete sequence of Shewanella pealeana ATCC 700345.</title>
        <authorList>
            <consortium name="US DOE Joint Genome Institute"/>
            <person name="Copeland A."/>
            <person name="Lucas S."/>
            <person name="Lapidus A."/>
            <person name="Barry K."/>
            <person name="Glavina del Rio T."/>
            <person name="Dalin E."/>
            <person name="Tice H."/>
            <person name="Pitluck S."/>
            <person name="Chertkov O."/>
            <person name="Brettin T."/>
            <person name="Bruce D."/>
            <person name="Detter J.C."/>
            <person name="Han C."/>
            <person name="Schmutz J."/>
            <person name="Larimer F."/>
            <person name="Land M."/>
            <person name="Hauser L."/>
            <person name="Kyrpides N."/>
            <person name="Kim E."/>
            <person name="Zhao J.-S.Z."/>
            <person name="Manno D."/>
            <person name="Hawari J."/>
            <person name="Richardson P."/>
        </authorList>
    </citation>
    <scope>NUCLEOTIDE SEQUENCE [LARGE SCALE GENOMIC DNA]</scope>
    <source>
        <strain>ATCC 700345 / ANG-SQ1</strain>
    </source>
</reference>
<feature type="chain" id="PRO_1000083295" description="Replication restart protein PriB">
    <location>
        <begin position="1"/>
        <end position="101"/>
    </location>
</feature>
<feature type="domain" description="SSB" evidence="1">
    <location>
        <begin position="1"/>
        <end position="101"/>
    </location>
</feature>
<proteinExistence type="inferred from homology"/>
<comment type="function">
    <text evidence="1">Involved in the restart of stalled replication forks, which reloads the replicative helicase on sites other than the origin of replication; the PriA-PriB pathway is the major replication restart pathway. During primosome assembly it facilitates complex formation between PriA and DnaT on DNA; stabilizes PriA on DNA. Stimulates the DNA unwinding activity of PriA helicase.</text>
</comment>
<comment type="subunit">
    <text evidence="1">Homodimer. Interacts with PriA and DnaT. Component of the replication restart primosome. Primosome assembly occurs via a 'hand-off' mechanism. PriA binds to replication forks, subsequently PriB then DnaT bind; DnaT then displaces ssDNA to generate the helicase loading substrate.</text>
</comment>
<comment type="similarity">
    <text evidence="1">Belongs to the PriB family.</text>
</comment>
<protein>
    <recommendedName>
        <fullName evidence="1">Replication restart protein PriB</fullName>
    </recommendedName>
</protein>
<accession>A8H8L1</accession>
<dbReference type="EMBL" id="CP000851">
    <property type="protein sequence ID" value="ABV88898.1"/>
    <property type="molecule type" value="Genomic_DNA"/>
</dbReference>
<dbReference type="RefSeq" id="WP_012156782.1">
    <property type="nucleotide sequence ID" value="NC_009901.1"/>
</dbReference>
<dbReference type="SMR" id="A8H8L1"/>
<dbReference type="STRING" id="398579.Spea_3585"/>
<dbReference type="KEGG" id="spl:Spea_3585"/>
<dbReference type="eggNOG" id="COG2965">
    <property type="taxonomic scope" value="Bacteria"/>
</dbReference>
<dbReference type="HOGENOM" id="CLU_166075_0_0_6"/>
<dbReference type="OrthoDB" id="9180733at2"/>
<dbReference type="Proteomes" id="UP000002608">
    <property type="component" value="Chromosome"/>
</dbReference>
<dbReference type="GO" id="GO:1990077">
    <property type="term" value="C:primosome complex"/>
    <property type="evidence" value="ECO:0007669"/>
    <property type="project" value="UniProtKB-KW"/>
</dbReference>
<dbReference type="GO" id="GO:0003697">
    <property type="term" value="F:single-stranded DNA binding"/>
    <property type="evidence" value="ECO:0007669"/>
    <property type="project" value="UniProtKB-UniRule"/>
</dbReference>
<dbReference type="GO" id="GO:0006269">
    <property type="term" value="P:DNA replication, synthesis of primer"/>
    <property type="evidence" value="ECO:0007669"/>
    <property type="project" value="UniProtKB-KW"/>
</dbReference>
<dbReference type="Gene3D" id="2.40.50.140">
    <property type="entry name" value="Nucleic acid-binding proteins"/>
    <property type="match status" value="1"/>
</dbReference>
<dbReference type="HAMAP" id="MF_00720">
    <property type="entry name" value="PriB"/>
    <property type="match status" value="1"/>
</dbReference>
<dbReference type="InterPro" id="IPR012340">
    <property type="entry name" value="NA-bd_OB-fold"/>
</dbReference>
<dbReference type="InterPro" id="IPR000424">
    <property type="entry name" value="Primosome_PriB/ssb"/>
</dbReference>
<dbReference type="InterPro" id="IPR023646">
    <property type="entry name" value="Prisomal_replication_PriB"/>
</dbReference>
<dbReference type="NCBIfam" id="TIGR04418">
    <property type="entry name" value="PriB_gamma"/>
    <property type="match status" value="1"/>
</dbReference>
<dbReference type="Pfam" id="PF22657">
    <property type="entry name" value="SSB_1"/>
    <property type="match status" value="1"/>
</dbReference>
<dbReference type="PIRSF" id="PIRSF003135">
    <property type="entry name" value="Primosomal_n"/>
    <property type="match status" value="1"/>
</dbReference>
<dbReference type="SUPFAM" id="SSF50249">
    <property type="entry name" value="Nucleic acid-binding proteins"/>
    <property type="match status" value="1"/>
</dbReference>
<dbReference type="PROSITE" id="PS50935">
    <property type="entry name" value="SSB"/>
    <property type="match status" value="1"/>
</dbReference>